<sequence>MLSKQIPLGIYEKALPAGECWLERLRLAKTLGFDFVEMSVDETDARLARLDWSREQRLALVSAVAETGVRVPSMCLSAHRRFPLGSEDDAVRAQGLEIMRKAIQFAQDVGIRVIQLAGYDVYYQQANDETRCRFRDGLKESVDMASRAQVTLAMEIMDYPLMNSISKALGYAHYLNNPWFQLYPDIGNLSAWDNDVQMELQAGIGHIVAVHVKDTKPGVFKNVPFGEGVVDFERCFETLKQSGYCGPYLIEMWSETAENPAAEVAKARDWVKARMASAGLVEAA</sequence>
<reference key="1">
    <citation type="journal article" date="2008" name="Genome Res.">
        <title>Comparative genome analysis of Salmonella enteritidis PT4 and Salmonella gallinarum 287/91 provides insights into evolutionary and host adaptation pathways.</title>
        <authorList>
            <person name="Thomson N.R."/>
            <person name="Clayton D.J."/>
            <person name="Windhorst D."/>
            <person name="Vernikos G."/>
            <person name="Davidson S."/>
            <person name="Churcher C."/>
            <person name="Quail M.A."/>
            <person name="Stevens M."/>
            <person name="Jones M.A."/>
            <person name="Watson M."/>
            <person name="Barron A."/>
            <person name="Layton A."/>
            <person name="Pickard D."/>
            <person name="Kingsley R.A."/>
            <person name="Bignell A."/>
            <person name="Clark L."/>
            <person name="Harris B."/>
            <person name="Ormond D."/>
            <person name="Abdellah Z."/>
            <person name="Brooks K."/>
            <person name="Cherevach I."/>
            <person name="Chillingworth T."/>
            <person name="Woodward J."/>
            <person name="Norberczak H."/>
            <person name="Lord A."/>
            <person name="Arrowsmith C."/>
            <person name="Jagels K."/>
            <person name="Moule S."/>
            <person name="Mungall K."/>
            <person name="Saunders M."/>
            <person name="Whitehead S."/>
            <person name="Chabalgoity J.A."/>
            <person name="Maskell D."/>
            <person name="Humphreys T."/>
            <person name="Roberts M."/>
            <person name="Barrow P.A."/>
            <person name="Dougan G."/>
            <person name="Parkhill J."/>
        </authorList>
    </citation>
    <scope>NUCLEOTIDE SEQUENCE [LARGE SCALE GENOMIC DNA]</scope>
    <source>
        <strain>P125109</strain>
    </source>
</reference>
<protein>
    <recommendedName>
        <fullName evidence="1">L-ribulose-5-phosphate 3-epimerase UlaE</fullName>
        <ecNumber evidence="1">5.1.3.22</ecNumber>
    </recommendedName>
    <alternativeName>
        <fullName evidence="1">L-ascorbate utilization protein E</fullName>
    </alternativeName>
    <alternativeName>
        <fullName evidence="1">L-xylulose-5-phosphate 3-epimerase</fullName>
    </alternativeName>
</protein>
<comment type="function">
    <text evidence="1">Catalyzes the isomerization of L-xylulose-5-phosphate to L-ribulose-5-phosphate. Is involved in the anaerobic L-ascorbate utilization.</text>
</comment>
<comment type="catalytic activity">
    <reaction evidence="1">
        <text>L-ribulose 5-phosphate = L-xylulose 5-phosphate</text>
        <dbReference type="Rhea" id="RHEA:18497"/>
        <dbReference type="ChEBI" id="CHEBI:57829"/>
        <dbReference type="ChEBI" id="CHEBI:58226"/>
        <dbReference type="EC" id="5.1.3.22"/>
    </reaction>
</comment>
<comment type="pathway">
    <text evidence="1">Cofactor degradation; L-ascorbate degradation; D-xylulose 5-phosphate from L-ascorbate: step 3/4.</text>
</comment>
<comment type="induction">
    <text evidence="1">Induced by L-ascorbate. Repressed by UlaR.</text>
</comment>
<comment type="similarity">
    <text evidence="1">Belongs to the L-ribulose-5-phosphate 3-epimerase family.</text>
</comment>
<dbReference type="EC" id="5.1.3.22" evidence="1"/>
<dbReference type="EMBL" id="AM933172">
    <property type="protein sequence ID" value="CAR35713.1"/>
    <property type="molecule type" value="Genomic_DNA"/>
</dbReference>
<dbReference type="RefSeq" id="WP_000949530.1">
    <property type="nucleotide sequence ID" value="NC_011294.1"/>
</dbReference>
<dbReference type="SMR" id="B5R0R4"/>
<dbReference type="KEGG" id="set:SEN4153"/>
<dbReference type="HOGENOM" id="CLU_082738_0_0_6"/>
<dbReference type="UniPathway" id="UPA00263">
    <property type="reaction ID" value="UER00379"/>
</dbReference>
<dbReference type="Proteomes" id="UP000000613">
    <property type="component" value="Chromosome"/>
</dbReference>
<dbReference type="GO" id="GO:0016861">
    <property type="term" value="F:intramolecular oxidoreductase activity, interconverting aldoses and ketoses"/>
    <property type="evidence" value="ECO:0007669"/>
    <property type="project" value="InterPro"/>
</dbReference>
<dbReference type="GO" id="GO:0034015">
    <property type="term" value="F:L-ribulose-5-phosphate 3-epimerase activity"/>
    <property type="evidence" value="ECO:0007669"/>
    <property type="project" value="UniProtKB-UniRule"/>
</dbReference>
<dbReference type="GO" id="GO:0019854">
    <property type="term" value="P:L-ascorbic acid catabolic process"/>
    <property type="evidence" value="ECO:0007669"/>
    <property type="project" value="UniProtKB-UniRule"/>
</dbReference>
<dbReference type="FunFam" id="3.20.20.150:FF:000003">
    <property type="entry name" value="L-ribulose-5-phosphate 3-epimerase UlaE"/>
    <property type="match status" value="1"/>
</dbReference>
<dbReference type="Gene3D" id="3.20.20.150">
    <property type="entry name" value="Divalent-metal-dependent TIM barrel enzymes"/>
    <property type="match status" value="1"/>
</dbReference>
<dbReference type="HAMAP" id="MF_01951">
    <property type="entry name" value="UlaE"/>
    <property type="match status" value="1"/>
</dbReference>
<dbReference type="InterPro" id="IPR004560">
    <property type="entry name" value="L-Ru-5P_3-Epase"/>
</dbReference>
<dbReference type="InterPro" id="IPR023492">
    <property type="entry name" value="L-Ru-5P_3-Epase_Enterobacteria"/>
</dbReference>
<dbReference type="InterPro" id="IPR050417">
    <property type="entry name" value="Sugar_Epim/Isomerase"/>
</dbReference>
<dbReference type="InterPro" id="IPR036237">
    <property type="entry name" value="Xyl_isomerase-like_sf"/>
</dbReference>
<dbReference type="InterPro" id="IPR013022">
    <property type="entry name" value="Xyl_isomerase-like_TIM-brl"/>
</dbReference>
<dbReference type="NCBIfam" id="TIGR00542">
    <property type="entry name" value="hxl6Piso_put"/>
    <property type="match status" value="1"/>
</dbReference>
<dbReference type="NCBIfam" id="NF009688">
    <property type="entry name" value="PRK13209.1"/>
    <property type="match status" value="1"/>
</dbReference>
<dbReference type="NCBIfam" id="NF009689">
    <property type="entry name" value="PRK13210.1"/>
    <property type="match status" value="1"/>
</dbReference>
<dbReference type="PANTHER" id="PTHR43489">
    <property type="entry name" value="ISOMERASE"/>
    <property type="match status" value="1"/>
</dbReference>
<dbReference type="PANTHER" id="PTHR43489:SF8">
    <property type="entry name" value="L-RIBULOSE-5-PHOSPHATE 3-EPIMERASE ULAE"/>
    <property type="match status" value="1"/>
</dbReference>
<dbReference type="Pfam" id="PF01261">
    <property type="entry name" value="AP_endonuc_2"/>
    <property type="match status" value="1"/>
</dbReference>
<dbReference type="SUPFAM" id="SSF51658">
    <property type="entry name" value="Xylose isomerase-like"/>
    <property type="match status" value="1"/>
</dbReference>
<feature type="chain" id="PRO_1000188833" description="L-ribulose-5-phosphate 3-epimerase UlaE">
    <location>
        <begin position="1"/>
        <end position="284"/>
    </location>
</feature>
<proteinExistence type="inferred from homology"/>
<accession>B5R0R4</accession>
<gene>
    <name evidence="1" type="primary">ulaE</name>
    <name type="ordered locus">SEN4153</name>
</gene>
<name>ULAE_SALEP</name>
<keyword id="KW-0413">Isomerase</keyword>
<organism>
    <name type="scientific">Salmonella enteritidis PT4 (strain P125109)</name>
    <dbReference type="NCBI Taxonomy" id="550537"/>
    <lineage>
        <taxon>Bacteria</taxon>
        <taxon>Pseudomonadati</taxon>
        <taxon>Pseudomonadota</taxon>
        <taxon>Gammaproteobacteria</taxon>
        <taxon>Enterobacterales</taxon>
        <taxon>Enterobacteriaceae</taxon>
        <taxon>Salmonella</taxon>
    </lineage>
</organism>
<evidence type="ECO:0000255" key="1">
    <source>
        <dbReference type="HAMAP-Rule" id="MF_01951"/>
    </source>
</evidence>